<evidence type="ECO:0000250" key="1"/>
<evidence type="ECO:0000269" key="2">
    <source>
    </source>
</evidence>
<evidence type="ECO:0000269" key="3">
    <source>
    </source>
</evidence>
<evidence type="ECO:0000305" key="4"/>
<evidence type="ECO:0007829" key="5">
    <source>
        <dbReference type="PDB" id="7JH3"/>
    </source>
</evidence>
<comment type="function">
    <text evidence="2 3">Catalyzes the transfer of the amino group from gamma-aminobutyrate (GABA) to alpha-ketoglutarate (KG) to yield succinic semialdehyde (SSA). PuuE is important for utilization of putrescine as the sole nitrogen or carbon source.</text>
</comment>
<comment type="catalytic activity">
    <reaction evidence="3">
        <text>4-aminobutanoate + 2-oxoglutarate = succinate semialdehyde + L-glutamate</text>
        <dbReference type="Rhea" id="RHEA:23352"/>
        <dbReference type="ChEBI" id="CHEBI:16810"/>
        <dbReference type="ChEBI" id="CHEBI:29985"/>
        <dbReference type="ChEBI" id="CHEBI:57706"/>
        <dbReference type="ChEBI" id="CHEBI:59888"/>
        <dbReference type="EC" id="2.6.1.19"/>
    </reaction>
    <physiologicalReaction direction="left-to-right" evidence="2 3">
        <dbReference type="Rhea" id="RHEA:23353"/>
    </physiologicalReaction>
</comment>
<comment type="cofactor">
    <cofactor>
        <name>pyridoxal 5'-phosphate</name>
        <dbReference type="ChEBI" id="CHEBI:597326"/>
    </cofactor>
</comment>
<comment type="activity regulation">
    <text evidence="3">Completely inhibited by succinate and low-aeration conditions.</text>
</comment>
<comment type="biophysicochemical properties">
    <kinetics>
        <KM evidence="3">0.0577 mM for SSA (at pH 7.8 and at 30 degrees Celsius)</KM>
        <KM evidence="3">1.57 mM for GABA (at pH 7.8 and at 30 degrees Celsius)</KM>
        <KM evidence="3">5.1 mM for KG (at pH 7.8 and at 30 degrees Celsius)</KM>
        <KM evidence="3">18 mM for L-glutamate (at pH 7.8 and at 30 degrees Celsius)</KM>
    </kinetics>
    <phDependence>
        <text evidence="3">Optimum pH is 9 for the forward reaction which is the transfer reaction of the amino group from GABA to beta-ketoglutarate, and pH 8 for the reverse reaction.</text>
    </phDependence>
</comment>
<comment type="pathway">
    <text evidence="2">Amine and polyamine degradation; putrescine degradation; succinate semialdehyde from 4-aminobutanoate.</text>
</comment>
<comment type="induction">
    <text evidence="3">By putrescine.</text>
</comment>
<comment type="disruption phenotype">
    <text evidence="3">Cells show only 35% of the wild-type activity.</text>
</comment>
<comment type="similarity">
    <text evidence="4">Belongs to the class-III pyridoxal-phosphate-dependent aminotransferase family.</text>
</comment>
<dbReference type="EC" id="2.6.1.19" evidence="2 3"/>
<dbReference type="EMBL" id="U38543">
    <property type="protein sequence ID" value="AAC45301.1"/>
    <property type="molecule type" value="Genomic_DNA"/>
</dbReference>
<dbReference type="EMBL" id="U00096">
    <property type="protein sequence ID" value="AAC74384.1"/>
    <property type="molecule type" value="Genomic_DNA"/>
</dbReference>
<dbReference type="EMBL" id="AP009048">
    <property type="protein sequence ID" value="BAA14871.1"/>
    <property type="molecule type" value="Genomic_DNA"/>
</dbReference>
<dbReference type="PIR" id="A64879">
    <property type="entry name" value="A64879"/>
</dbReference>
<dbReference type="RefSeq" id="NP_415818.1">
    <property type="nucleotide sequence ID" value="NC_000913.3"/>
</dbReference>
<dbReference type="RefSeq" id="WP_000069229.1">
    <property type="nucleotide sequence ID" value="NZ_SSUW01000011.1"/>
</dbReference>
<dbReference type="PDB" id="7JH3">
    <property type="method" value="X-ray"/>
    <property type="resolution" value="2.68 A"/>
    <property type="chains" value="A/B/C/D/E/F=1-421"/>
</dbReference>
<dbReference type="PDBsum" id="7JH3"/>
<dbReference type="SMR" id="P50457"/>
<dbReference type="BioGRID" id="4263526">
    <property type="interactions" value="18"/>
</dbReference>
<dbReference type="BioGRID" id="849820">
    <property type="interactions" value="1"/>
</dbReference>
<dbReference type="DIP" id="DIP-9825N"/>
<dbReference type="FunCoup" id="P50457">
    <property type="interactions" value="545"/>
</dbReference>
<dbReference type="IntAct" id="P50457">
    <property type="interactions" value="3"/>
</dbReference>
<dbReference type="STRING" id="511145.b1302"/>
<dbReference type="PaxDb" id="511145-b1302"/>
<dbReference type="EnsemblBacteria" id="AAC74384">
    <property type="protein sequence ID" value="AAC74384"/>
    <property type="gene ID" value="b1302"/>
</dbReference>
<dbReference type="GeneID" id="945446"/>
<dbReference type="KEGG" id="ecj:JW1295"/>
<dbReference type="KEGG" id="eco:b1302"/>
<dbReference type="PATRIC" id="fig|511145.12.peg.1358"/>
<dbReference type="EchoBASE" id="EB2979"/>
<dbReference type="eggNOG" id="COG0160">
    <property type="taxonomic scope" value="Bacteria"/>
</dbReference>
<dbReference type="HOGENOM" id="CLU_016922_10_0_6"/>
<dbReference type="InParanoid" id="P50457"/>
<dbReference type="OMA" id="ERDNICQ"/>
<dbReference type="OrthoDB" id="9801052at2"/>
<dbReference type="PhylomeDB" id="P50457"/>
<dbReference type="BioCyc" id="EcoCyc:G6646-MONOMER"/>
<dbReference type="BioCyc" id="MetaCyc:G6646-MONOMER"/>
<dbReference type="SABIO-RK" id="P50457"/>
<dbReference type="PRO" id="PR:P50457"/>
<dbReference type="Proteomes" id="UP000000625">
    <property type="component" value="Chromosome"/>
</dbReference>
<dbReference type="GO" id="GO:0005829">
    <property type="term" value="C:cytosol"/>
    <property type="evidence" value="ECO:0000318"/>
    <property type="project" value="GO_Central"/>
</dbReference>
<dbReference type="GO" id="GO:0034386">
    <property type="term" value="F:4-aminobutyrate:2-oxoglutarate transaminase activity"/>
    <property type="evidence" value="ECO:0007669"/>
    <property type="project" value="UniProtKB-EC"/>
</dbReference>
<dbReference type="GO" id="GO:0030170">
    <property type="term" value="F:pyridoxal phosphate binding"/>
    <property type="evidence" value="ECO:0000314"/>
    <property type="project" value="EcoCyc"/>
</dbReference>
<dbReference type="GO" id="GO:0009450">
    <property type="term" value="P:gamma-aminobutyric acid catabolic process"/>
    <property type="evidence" value="ECO:0000318"/>
    <property type="project" value="GO_Central"/>
</dbReference>
<dbReference type="GO" id="GO:0009447">
    <property type="term" value="P:putrescine catabolic process"/>
    <property type="evidence" value="ECO:0000315"/>
    <property type="project" value="EcoCyc"/>
</dbReference>
<dbReference type="CDD" id="cd00610">
    <property type="entry name" value="OAT_like"/>
    <property type="match status" value="1"/>
</dbReference>
<dbReference type="FunFam" id="3.40.640.10:FF:000013">
    <property type="entry name" value="4-aminobutyrate aminotransferase"/>
    <property type="match status" value="1"/>
</dbReference>
<dbReference type="Gene3D" id="3.90.1150.10">
    <property type="entry name" value="Aspartate Aminotransferase, domain 1"/>
    <property type="match status" value="1"/>
</dbReference>
<dbReference type="Gene3D" id="3.40.640.10">
    <property type="entry name" value="Type I PLP-dependent aspartate aminotransferase-like (Major domain)"/>
    <property type="match status" value="1"/>
</dbReference>
<dbReference type="InterPro" id="IPR004632">
    <property type="entry name" value="4NH2But_aminotransferase_bac"/>
</dbReference>
<dbReference type="InterPro" id="IPR005814">
    <property type="entry name" value="Aminotrans_3"/>
</dbReference>
<dbReference type="InterPro" id="IPR049704">
    <property type="entry name" value="Aminotrans_3_PPA_site"/>
</dbReference>
<dbReference type="InterPro" id="IPR050103">
    <property type="entry name" value="Class-III_PLP-dep_AT"/>
</dbReference>
<dbReference type="InterPro" id="IPR015424">
    <property type="entry name" value="PyrdxlP-dep_Trfase"/>
</dbReference>
<dbReference type="InterPro" id="IPR015421">
    <property type="entry name" value="PyrdxlP-dep_Trfase_major"/>
</dbReference>
<dbReference type="InterPro" id="IPR015422">
    <property type="entry name" value="PyrdxlP-dep_Trfase_small"/>
</dbReference>
<dbReference type="NCBIfam" id="TIGR00700">
    <property type="entry name" value="GABAtrnsam"/>
    <property type="match status" value="1"/>
</dbReference>
<dbReference type="NCBIfam" id="NF005272">
    <property type="entry name" value="PRK06777.1"/>
    <property type="match status" value="1"/>
</dbReference>
<dbReference type="NCBIfam" id="NF007308">
    <property type="entry name" value="PRK09792.1"/>
    <property type="match status" value="1"/>
</dbReference>
<dbReference type="PANTHER" id="PTHR11986">
    <property type="entry name" value="AMINOTRANSFERASE CLASS III"/>
    <property type="match status" value="1"/>
</dbReference>
<dbReference type="PANTHER" id="PTHR11986:SF58">
    <property type="entry name" value="LEUCINE_METHIONINE RACEMASE"/>
    <property type="match status" value="1"/>
</dbReference>
<dbReference type="Pfam" id="PF00202">
    <property type="entry name" value="Aminotran_3"/>
    <property type="match status" value="1"/>
</dbReference>
<dbReference type="PIRSF" id="PIRSF000521">
    <property type="entry name" value="Transaminase_4ab_Lys_Orn"/>
    <property type="match status" value="1"/>
</dbReference>
<dbReference type="SUPFAM" id="SSF53383">
    <property type="entry name" value="PLP-dependent transferases"/>
    <property type="match status" value="1"/>
</dbReference>
<dbReference type="PROSITE" id="PS00600">
    <property type="entry name" value="AA_TRANSFER_CLASS_3"/>
    <property type="match status" value="1"/>
</dbReference>
<accession>P50457</accession>
<accession>P78150</accession>
<name>PUUE_ECOLI</name>
<feature type="chain" id="PRO_0000120388" description="4-aminobutyrate aminotransferase PuuE">
    <location>
        <begin position="1"/>
        <end position="421"/>
    </location>
</feature>
<feature type="binding site" evidence="1">
    <location>
        <begin position="110"/>
        <end position="111"/>
    </location>
    <ligand>
        <name>pyridoxal 5'-phosphate</name>
        <dbReference type="ChEBI" id="CHEBI:597326"/>
    </ligand>
</feature>
<feature type="binding site" evidence="1">
    <location>
        <begin position="238"/>
        <end position="241"/>
    </location>
    <ligand>
        <name>pyridoxal 5'-phosphate</name>
        <dbReference type="ChEBI" id="CHEBI:597326"/>
    </ligand>
</feature>
<feature type="binding site" evidence="1">
    <location>
        <position position="296"/>
    </location>
    <ligand>
        <name>pyridoxal 5'-phosphate</name>
        <dbReference type="ChEBI" id="CHEBI:597326"/>
    </ligand>
</feature>
<feature type="modified residue" description="N6-(pyridoxal phosphate)lysine" evidence="1">
    <location>
        <position position="267"/>
    </location>
</feature>
<feature type="mutagenesis site" description="No GABA-AT activity." evidence="3">
    <original>K</original>
    <variation>A</variation>
    <location>
        <position position="267"/>
    </location>
</feature>
<feature type="helix" evidence="5">
    <location>
        <begin position="3"/>
        <end position="13"/>
    </location>
</feature>
<feature type="strand" evidence="5">
    <location>
        <begin position="26"/>
        <end position="31"/>
    </location>
</feature>
<feature type="strand" evidence="5">
    <location>
        <begin position="33"/>
        <end position="36"/>
    </location>
</feature>
<feature type="strand" evidence="5">
    <location>
        <begin position="41"/>
        <end position="46"/>
    </location>
</feature>
<feature type="helix" evidence="5">
    <location>
        <begin position="47"/>
        <end position="50"/>
    </location>
</feature>
<feature type="helix" evidence="5">
    <location>
        <begin position="59"/>
        <end position="69"/>
    </location>
</feature>
<feature type="turn" evidence="5">
    <location>
        <begin position="77"/>
        <end position="79"/>
    </location>
</feature>
<feature type="helix" evidence="5">
    <location>
        <begin position="83"/>
        <end position="95"/>
    </location>
</feature>
<feature type="strand" evidence="5">
    <location>
        <begin position="102"/>
        <end position="109"/>
    </location>
</feature>
<feature type="helix" evidence="5">
    <location>
        <begin position="110"/>
        <end position="125"/>
    </location>
</feature>
<feature type="strand" evidence="5">
    <location>
        <begin position="129"/>
        <end position="133"/>
    </location>
</feature>
<feature type="helix" evidence="5">
    <location>
        <begin position="142"/>
        <end position="147"/>
    </location>
</feature>
<feature type="turn" evidence="5">
    <location>
        <begin position="152"/>
        <end position="157"/>
    </location>
</feature>
<feature type="strand" evidence="5">
    <location>
        <begin position="163"/>
        <end position="168"/>
    </location>
</feature>
<feature type="turn" evidence="5">
    <location>
        <begin position="173"/>
        <end position="176"/>
    </location>
</feature>
<feature type="helix" evidence="5">
    <location>
        <begin position="179"/>
        <end position="192"/>
    </location>
</feature>
<feature type="helix" evidence="5">
    <location>
        <begin position="196"/>
        <end position="198"/>
    </location>
</feature>
<feature type="strand" evidence="5">
    <location>
        <begin position="199"/>
        <end position="204"/>
    </location>
</feature>
<feature type="turn" evidence="5">
    <location>
        <begin position="209"/>
        <end position="212"/>
    </location>
</feature>
<feature type="helix" evidence="5">
    <location>
        <begin position="218"/>
        <end position="231"/>
    </location>
</feature>
<feature type="strand" evidence="5">
    <location>
        <begin position="234"/>
        <end position="238"/>
    </location>
</feature>
<feature type="turn" evidence="5">
    <location>
        <begin position="240"/>
        <end position="247"/>
    </location>
</feature>
<feature type="strand" evidence="5">
    <location>
        <begin position="248"/>
        <end position="251"/>
    </location>
</feature>
<feature type="helix" evidence="5">
    <location>
        <begin position="252"/>
        <end position="255"/>
    </location>
</feature>
<feature type="strand" evidence="5">
    <location>
        <begin position="256"/>
        <end position="258"/>
    </location>
</feature>
<feature type="strand" evidence="5">
    <location>
        <begin position="261"/>
        <end position="265"/>
    </location>
</feature>
<feature type="strand" evidence="5">
    <location>
        <begin position="270"/>
        <end position="273"/>
    </location>
</feature>
<feature type="strand" evidence="5">
    <location>
        <begin position="276"/>
        <end position="281"/>
    </location>
</feature>
<feature type="helix" evidence="5">
    <location>
        <begin position="282"/>
        <end position="285"/>
    </location>
</feature>
<feature type="helix" evidence="5">
    <location>
        <begin position="301"/>
        <end position="316"/>
    </location>
</feature>
<feature type="helix" evidence="5">
    <location>
        <begin position="319"/>
        <end position="337"/>
    </location>
</feature>
<feature type="turn" evidence="5">
    <location>
        <begin position="338"/>
        <end position="340"/>
    </location>
</feature>
<feature type="strand" evidence="5">
    <location>
        <begin position="344"/>
        <end position="350"/>
    </location>
</feature>
<feature type="strand" evidence="5">
    <location>
        <begin position="353"/>
        <end position="359"/>
    </location>
</feature>
<feature type="turn" evidence="5">
    <location>
        <begin position="361"/>
        <end position="363"/>
    </location>
</feature>
<feature type="helix" evidence="5">
    <location>
        <begin position="368"/>
        <end position="380"/>
    </location>
</feature>
<feature type="strand" evidence="5">
    <location>
        <begin position="386"/>
        <end position="392"/>
    </location>
</feature>
<feature type="strand" evidence="5">
    <location>
        <begin position="394"/>
        <end position="397"/>
    </location>
</feature>
<feature type="helix" evidence="5">
    <location>
        <begin position="405"/>
        <end position="420"/>
    </location>
</feature>
<sequence>MSNNEFHQRRLSATPRGVGVMCNFFAQSAENATLKDVEGNEYIDFAAGIAVLNTGHRHPDLVAAVEQQLQQFTHTAYQIVPYESYVTLAEKINALAPVSGQAKTAFFTTGAEAVENAVKIARAHTGRPGVIAFSGGFHGRTYMTMALTGKVAPYKIGFGPFPGSVYHVPYPSDLHGISTQDSLDAIERLFKSDIEAKQVAAIIFEPVQGEGGFNVAPKELVAAIRRLCDEHGIVMIADEVQSGFARTGKLFAMDHYADKPDLMTMAKSLAGGMPLSGVVGNANIMDAPAPGGLGGTYAGNPLAVAAAHAVLNIIDKESLCERANQLGQRLKNTLIDAKESVPAIAAVRGLGSMIAVEFNDPQTGEPSAAIAQKIQQRALAQGLLLLTCGAYGNVIRFLYPLTIPDAQFDAAMKILQDALSD</sequence>
<organism>
    <name type="scientific">Escherichia coli (strain K12)</name>
    <dbReference type="NCBI Taxonomy" id="83333"/>
    <lineage>
        <taxon>Bacteria</taxon>
        <taxon>Pseudomonadati</taxon>
        <taxon>Pseudomonadota</taxon>
        <taxon>Gammaproteobacteria</taxon>
        <taxon>Enterobacterales</taxon>
        <taxon>Enterobacteriaceae</taxon>
        <taxon>Escherichia</taxon>
    </lineage>
</organism>
<gene>
    <name type="primary">puuE</name>
    <name type="synonym">goaG</name>
    <name type="ordered locus">b1302</name>
    <name type="ordered locus">JW1295</name>
</gene>
<protein>
    <recommendedName>
        <fullName>4-aminobutyrate aminotransferase PuuE</fullName>
        <ecNumber evidence="2 3">2.6.1.19</ecNumber>
    </recommendedName>
    <alternativeName>
        <fullName>GABA aminotransferase</fullName>
        <shortName>GABA-AT</shortName>
    </alternativeName>
    <alternativeName>
        <fullName>Gamma-amino-N-butyrate transaminase</fullName>
        <shortName>GABA transaminase</shortName>
    </alternativeName>
    <alternativeName>
        <fullName>Glutamate:succinic semialdehyde transaminase</fullName>
    </alternativeName>
</protein>
<keyword id="KW-0002">3D-structure</keyword>
<keyword id="KW-0032">Aminotransferase</keyword>
<keyword id="KW-0663">Pyridoxal phosphate</keyword>
<keyword id="KW-1185">Reference proteome</keyword>
<keyword id="KW-0808">Transferase</keyword>
<reference key="1">
    <citation type="submission" date="1995-10" db="EMBL/GenBank/DDBJ databases">
        <authorList>
            <person name="Jovanovic G."/>
        </authorList>
    </citation>
    <scope>NUCLEOTIDE SEQUENCE [GENOMIC DNA]</scope>
    <source>
        <strain>K12</strain>
    </source>
</reference>
<reference key="2">
    <citation type="journal article" date="1996" name="DNA Res.">
        <title>A 570-kb DNA sequence of the Escherichia coli K-12 genome corresponding to the 28.0-40.1 min region on the linkage map.</title>
        <authorList>
            <person name="Aiba H."/>
            <person name="Baba T."/>
            <person name="Fujita K."/>
            <person name="Hayashi K."/>
            <person name="Inada T."/>
            <person name="Isono K."/>
            <person name="Itoh T."/>
            <person name="Kasai H."/>
            <person name="Kashimoto K."/>
            <person name="Kimura S."/>
            <person name="Kitakawa M."/>
            <person name="Kitagawa M."/>
            <person name="Makino K."/>
            <person name="Miki T."/>
            <person name="Mizobuchi K."/>
            <person name="Mori H."/>
            <person name="Mori T."/>
            <person name="Motomura K."/>
            <person name="Nakade S."/>
            <person name="Nakamura Y."/>
            <person name="Nashimoto H."/>
            <person name="Nishio Y."/>
            <person name="Oshima T."/>
            <person name="Saito N."/>
            <person name="Sampei G."/>
            <person name="Seki Y."/>
            <person name="Sivasundaram S."/>
            <person name="Tagami H."/>
            <person name="Takeda J."/>
            <person name="Takemoto K."/>
            <person name="Takeuchi Y."/>
            <person name="Wada C."/>
            <person name="Yamamoto Y."/>
            <person name="Horiuchi T."/>
        </authorList>
    </citation>
    <scope>NUCLEOTIDE SEQUENCE [LARGE SCALE GENOMIC DNA]</scope>
    <source>
        <strain>K12 / W3110 / ATCC 27325 / DSM 5911</strain>
    </source>
</reference>
<reference key="3">
    <citation type="journal article" date="1997" name="Science">
        <title>The complete genome sequence of Escherichia coli K-12.</title>
        <authorList>
            <person name="Blattner F.R."/>
            <person name="Plunkett G. III"/>
            <person name="Bloch C.A."/>
            <person name="Perna N.T."/>
            <person name="Burland V."/>
            <person name="Riley M."/>
            <person name="Collado-Vides J."/>
            <person name="Glasner J.D."/>
            <person name="Rode C.K."/>
            <person name="Mayhew G.F."/>
            <person name="Gregor J."/>
            <person name="Davis N.W."/>
            <person name="Kirkpatrick H.A."/>
            <person name="Goeden M.A."/>
            <person name="Rose D.J."/>
            <person name="Mau B."/>
            <person name="Shao Y."/>
        </authorList>
    </citation>
    <scope>NUCLEOTIDE SEQUENCE [LARGE SCALE GENOMIC DNA]</scope>
    <source>
        <strain>K12 / MG1655 / ATCC 47076</strain>
    </source>
</reference>
<reference key="4">
    <citation type="journal article" date="2006" name="Mol. Syst. Biol.">
        <title>Highly accurate genome sequences of Escherichia coli K-12 strains MG1655 and W3110.</title>
        <authorList>
            <person name="Hayashi K."/>
            <person name="Morooka N."/>
            <person name="Yamamoto Y."/>
            <person name="Fujita K."/>
            <person name="Isono K."/>
            <person name="Choi S."/>
            <person name="Ohtsubo E."/>
            <person name="Baba T."/>
            <person name="Wanner B.L."/>
            <person name="Mori H."/>
            <person name="Horiuchi T."/>
        </authorList>
    </citation>
    <scope>NUCLEOTIDE SEQUENCE [LARGE SCALE GENOMIC DNA]</scope>
    <source>
        <strain>K12 / W3110 / ATCC 27325 / DSM 5911</strain>
    </source>
</reference>
<reference key="5">
    <citation type="journal article" date="2005" name="J. Biol. Chem.">
        <title>A novel putrescine utilization pathway involves gamma-glutamylated intermediates of Escherichia coli K-12.</title>
        <authorList>
            <person name="Kurihara S."/>
            <person name="Oda S."/>
            <person name="Kato K."/>
            <person name="Kim H.G."/>
            <person name="Koyanagi T."/>
            <person name="Kumagai H."/>
            <person name="Suzuki H."/>
        </authorList>
    </citation>
    <scope>FUNCTION AS A GABA AMINOTRANSFERASE</scope>
    <scope>CATALYTIC ACTIVITY</scope>
    <scope>PATHWAY</scope>
    <scope>NOMENCLATURE</scope>
    <source>
        <strain>K12</strain>
    </source>
</reference>
<reference key="6">
    <citation type="journal article" date="2010" name="J. Bacteriol.">
        <title>A putrescine-inducible pathway comprising PuuE-YneI in which gamma-aminobutyrate is degraded into succinate in Escherichia coli K-12.</title>
        <authorList>
            <person name="Kurihara S."/>
            <person name="Kato K."/>
            <person name="Asada K."/>
            <person name="Kumagai H."/>
            <person name="Suzuki H."/>
        </authorList>
    </citation>
    <scope>FUNCTION IN PUTRESCINE DEGRADATION AND AS A GABA AMINOTRANSFERASE</scope>
    <scope>CATALYTIC ACTIVITY</scope>
    <scope>BIOPHYSICOCHEMICAL PROPERTIES</scope>
    <scope>MUTAGENESIS OF LYS-267</scope>
    <scope>DISRUPTION PHENOTYPE</scope>
    <scope>ACTIVITY REGULATION</scope>
    <scope>INDUCTION</scope>
</reference>
<proteinExistence type="evidence at protein level"/>